<reference key="1">
    <citation type="submission" date="2006-10" db="EMBL/GenBank/DDBJ databases">
        <authorList>
            <person name="Fleischmann R.D."/>
            <person name="Dodson R.J."/>
            <person name="Haft D.H."/>
            <person name="Merkel J.S."/>
            <person name="Nelson W.C."/>
            <person name="Fraser C.M."/>
        </authorList>
    </citation>
    <scope>NUCLEOTIDE SEQUENCE [LARGE SCALE GENOMIC DNA]</scope>
    <source>
        <strain>104</strain>
    </source>
</reference>
<sequence>MADSMQLAGIVLAGGESRRMGRDKATLPGPRGAATLLEYVVGVLTQRCDPIFVMAAPGQPLPEVSARIIRDEIRGQGPLPATGRGLRAAAEAGARYAFVCAVDMPLLSPELIDDLVHLATETNAEVVLPWDGRSHYLASLYRTDLAERIDRLVAGGARSMRALIDASDAQQIVLPESRFLANVNTEADLRALAQARA</sequence>
<evidence type="ECO:0000255" key="1">
    <source>
        <dbReference type="HAMAP-Rule" id="MF_00316"/>
    </source>
</evidence>
<comment type="function">
    <text evidence="1">Transfers a GMP moiety from GTP to Mo-molybdopterin (Mo-MPT) cofactor (Moco or molybdenum cofactor) to form Mo-molybdopterin guanine dinucleotide (Mo-MGD) cofactor.</text>
</comment>
<comment type="catalytic activity">
    <reaction evidence="1">
        <text>Mo-molybdopterin + GTP + H(+) = Mo-molybdopterin guanine dinucleotide + diphosphate</text>
        <dbReference type="Rhea" id="RHEA:34243"/>
        <dbReference type="ChEBI" id="CHEBI:15378"/>
        <dbReference type="ChEBI" id="CHEBI:33019"/>
        <dbReference type="ChEBI" id="CHEBI:37565"/>
        <dbReference type="ChEBI" id="CHEBI:71302"/>
        <dbReference type="ChEBI" id="CHEBI:71310"/>
        <dbReference type="EC" id="2.7.7.77"/>
    </reaction>
</comment>
<comment type="cofactor">
    <cofactor evidence="1">
        <name>Mg(2+)</name>
        <dbReference type="ChEBI" id="CHEBI:18420"/>
    </cofactor>
</comment>
<comment type="subcellular location">
    <subcellularLocation>
        <location evidence="1">Cytoplasm</location>
    </subcellularLocation>
</comment>
<comment type="domain">
    <text evidence="1">The N-terminal domain determines nucleotide recognition and specific binding, while the C-terminal domain determines the specific binding to the target protein.</text>
</comment>
<comment type="similarity">
    <text evidence="1">Belongs to the MobA family.</text>
</comment>
<proteinExistence type="inferred from homology"/>
<protein>
    <recommendedName>
        <fullName evidence="1">Probable molybdenum cofactor guanylyltransferase</fullName>
        <shortName evidence="1">MoCo guanylyltransferase</shortName>
        <ecNumber evidence="1">2.7.7.77</ecNumber>
    </recommendedName>
    <alternativeName>
        <fullName evidence="1">GTP:molybdopterin guanylyltransferase</fullName>
    </alternativeName>
    <alternativeName>
        <fullName evidence="1">Mo-MPT guanylyltransferase</fullName>
    </alternativeName>
    <alternativeName>
        <fullName evidence="1">Molybdopterin guanylyltransferase</fullName>
    </alternativeName>
    <alternativeName>
        <fullName evidence="1">Molybdopterin-guanine dinucleotide synthase</fullName>
        <shortName evidence="1">MGD synthase</shortName>
    </alternativeName>
</protein>
<organism>
    <name type="scientific">Mycobacterium avium (strain 104)</name>
    <dbReference type="NCBI Taxonomy" id="243243"/>
    <lineage>
        <taxon>Bacteria</taxon>
        <taxon>Bacillati</taxon>
        <taxon>Actinomycetota</taxon>
        <taxon>Actinomycetes</taxon>
        <taxon>Mycobacteriales</taxon>
        <taxon>Mycobacteriaceae</taxon>
        <taxon>Mycobacterium</taxon>
        <taxon>Mycobacterium avium complex (MAC)</taxon>
    </lineage>
</organism>
<gene>
    <name evidence="1" type="primary">mobA</name>
    <name type="ordered locus">MAV_1719</name>
</gene>
<dbReference type="EC" id="2.7.7.77" evidence="1"/>
<dbReference type="EMBL" id="CP000479">
    <property type="protein sequence ID" value="ABK66836.1"/>
    <property type="molecule type" value="Genomic_DNA"/>
</dbReference>
<dbReference type="SMR" id="A0QDF8"/>
<dbReference type="KEGG" id="mav:MAV_1719"/>
<dbReference type="HOGENOM" id="CLU_055597_3_2_11"/>
<dbReference type="Proteomes" id="UP000001574">
    <property type="component" value="Chromosome"/>
</dbReference>
<dbReference type="GO" id="GO:0005737">
    <property type="term" value="C:cytoplasm"/>
    <property type="evidence" value="ECO:0007669"/>
    <property type="project" value="UniProtKB-SubCell"/>
</dbReference>
<dbReference type="GO" id="GO:0005525">
    <property type="term" value="F:GTP binding"/>
    <property type="evidence" value="ECO:0007669"/>
    <property type="project" value="UniProtKB-UniRule"/>
</dbReference>
<dbReference type="GO" id="GO:0046872">
    <property type="term" value="F:metal ion binding"/>
    <property type="evidence" value="ECO:0007669"/>
    <property type="project" value="UniProtKB-KW"/>
</dbReference>
<dbReference type="GO" id="GO:0061603">
    <property type="term" value="F:molybdenum cofactor guanylyltransferase activity"/>
    <property type="evidence" value="ECO:0007669"/>
    <property type="project" value="UniProtKB-EC"/>
</dbReference>
<dbReference type="GO" id="GO:0006777">
    <property type="term" value="P:Mo-molybdopterin cofactor biosynthetic process"/>
    <property type="evidence" value="ECO:0007669"/>
    <property type="project" value="UniProtKB-KW"/>
</dbReference>
<dbReference type="CDD" id="cd02503">
    <property type="entry name" value="MobA"/>
    <property type="match status" value="1"/>
</dbReference>
<dbReference type="Gene3D" id="3.90.550.10">
    <property type="entry name" value="Spore Coat Polysaccharide Biosynthesis Protein SpsA, Chain A"/>
    <property type="match status" value="1"/>
</dbReference>
<dbReference type="HAMAP" id="MF_00316">
    <property type="entry name" value="MobA"/>
    <property type="match status" value="1"/>
</dbReference>
<dbReference type="InterPro" id="IPR025877">
    <property type="entry name" value="MobA-like_NTP_Trfase"/>
</dbReference>
<dbReference type="InterPro" id="IPR013482">
    <property type="entry name" value="Molybde_CF_guanTrfase"/>
</dbReference>
<dbReference type="InterPro" id="IPR029044">
    <property type="entry name" value="Nucleotide-diphossugar_trans"/>
</dbReference>
<dbReference type="NCBIfam" id="NF001855">
    <property type="entry name" value="PRK00576.1"/>
    <property type="match status" value="1"/>
</dbReference>
<dbReference type="PANTHER" id="PTHR19136">
    <property type="entry name" value="MOLYBDENUM COFACTOR GUANYLYLTRANSFERASE"/>
    <property type="match status" value="1"/>
</dbReference>
<dbReference type="PANTHER" id="PTHR19136:SF81">
    <property type="entry name" value="MOLYBDENUM COFACTOR GUANYLYLTRANSFERASE"/>
    <property type="match status" value="1"/>
</dbReference>
<dbReference type="Pfam" id="PF12804">
    <property type="entry name" value="NTP_transf_3"/>
    <property type="match status" value="1"/>
</dbReference>
<dbReference type="SUPFAM" id="SSF53448">
    <property type="entry name" value="Nucleotide-diphospho-sugar transferases"/>
    <property type="match status" value="1"/>
</dbReference>
<feature type="chain" id="PRO_1000115800" description="Probable molybdenum cofactor guanylyltransferase">
    <location>
        <begin position="1"/>
        <end position="197"/>
    </location>
</feature>
<feature type="binding site" evidence="1">
    <location>
        <begin position="12"/>
        <end position="14"/>
    </location>
    <ligand>
        <name>GTP</name>
        <dbReference type="ChEBI" id="CHEBI:37565"/>
    </ligand>
</feature>
<feature type="binding site" evidence="1">
    <location>
        <position position="24"/>
    </location>
    <ligand>
        <name>GTP</name>
        <dbReference type="ChEBI" id="CHEBI:37565"/>
    </ligand>
</feature>
<feature type="binding site" evidence="1">
    <location>
        <position position="71"/>
    </location>
    <ligand>
        <name>GTP</name>
        <dbReference type="ChEBI" id="CHEBI:37565"/>
    </ligand>
</feature>
<feature type="binding site" evidence="1">
    <location>
        <position position="103"/>
    </location>
    <ligand>
        <name>GTP</name>
        <dbReference type="ChEBI" id="CHEBI:37565"/>
    </ligand>
</feature>
<feature type="binding site" evidence="1">
    <location>
        <position position="103"/>
    </location>
    <ligand>
        <name>Mg(2+)</name>
        <dbReference type="ChEBI" id="CHEBI:18420"/>
    </ligand>
</feature>
<keyword id="KW-0963">Cytoplasm</keyword>
<keyword id="KW-0342">GTP-binding</keyword>
<keyword id="KW-0460">Magnesium</keyword>
<keyword id="KW-0479">Metal-binding</keyword>
<keyword id="KW-0501">Molybdenum cofactor biosynthesis</keyword>
<keyword id="KW-0547">Nucleotide-binding</keyword>
<keyword id="KW-0808">Transferase</keyword>
<accession>A0QDF8</accession>
<name>MOBA_MYCA1</name>